<protein>
    <recommendedName>
        <fullName evidence="3">Conotoxin Lt5.9</fullName>
    </recommendedName>
    <alternativeName>
        <fullName evidence="6">Lt5i</fullName>
    </alternativeName>
</protein>
<name>CT59_CONLT</name>
<evidence type="ECO:0000250" key="1"/>
<evidence type="ECO:0000255" key="2"/>
<evidence type="ECO:0000303" key="3">
    <source>
    </source>
</evidence>
<evidence type="ECO:0000305" key="4"/>
<evidence type="ECO:0000305" key="5">
    <source>
    </source>
</evidence>
<evidence type="ECO:0000312" key="6">
    <source>
        <dbReference type="EMBL" id="ABC70193.1"/>
    </source>
</evidence>
<organism>
    <name type="scientific">Conus litteratus</name>
    <name type="common">Lettered cone</name>
    <dbReference type="NCBI Taxonomy" id="89445"/>
    <lineage>
        <taxon>Eukaryota</taxon>
        <taxon>Metazoa</taxon>
        <taxon>Spiralia</taxon>
        <taxon>Lophotrochozoa</taxon>
        <taxon>Mollusca</taxon>
        <taxon>Gastropoda</taxon>
        <taxon>Caenogastropoda</taxon>
        <taxon>Neogastropoda</taxon>
        <taxon>Conoidea</taxon>
        <taxon>Conidae</taxon>
        <taxon>Conus</taxon>
        <taxon>Elisaconus</taxon>
    </lineage>
</organism>
<reference key="1">
    <citation type="journal article" date="2006" name="Genomics">
        <title>Diversity and evolution of conotoxins based on gene expression profiling of Conus litteratus.</title>
        <authorList>
            <person name="Pi C."/>
            <person name="Liu J."/>
            <person name="Peng C."/>
            <person name="Liu Y."/>
            <person name="Jiang X."/>
            <person name="Zhao Y."/>
            <person name="Tang S."/>
            <person name="Wang L."/>
            <person name="Dong M."/>
            <person name="Chen S."/>
            <person name="Xu A."/>
        </authorList>
    </citation>
    <scope>NUCLEOTIDE SEQUENCE [MRNA]</scope>
    <source>
        <tissue>Venom duct</tissue>
    </source>
</reference>
<comment type="subcellular location">
    <subcellularLocation>
        <location evidence="5">Secreted</location>
    </subcellularLocation>
</comment>
<comment type="tissue specificity">
    <text evidence="5">Expressed by the venom duct.</text>
</comment>
<comment type="domain">
    <text evidence="4">The cysteine framework is V (CC-CC).</text>
</comment>
<comment type="PTM">
    <text evidence="4">Contains 2 disulfide bonds that can be either 'C1-C3, C2-C4' or 'C1-C4, C2-C3', since these disulfide connectivities have been observed for conotoxins with cysteine framework V (for examples, see AC P0DQQ7 and AC P81755).</text>
</comment>
<comment type="similarity">
    <text evidence="4">Belongs to the conotoxin T superfamily.</text>
</comment>
<accession>Q1A3Q7</accession>
<feature type="signal peptide" evidence="2">
    <location>
        <begin position="1"/>
        <end position="19"/>
    </location>
</feature>
<feature type="propeptide" id="PRO_0000315437" evidence="1">
    <location>
        <begin position="20"/>
        <end position="46"/>
    </location>
</feature>
<feature type="peptide" id="PRO_0000315438" description="Conotoxin Lt5.9">
    <location>
        <begin position="49"/>
        <end position="67"/>
    </location>
</feature>
<dbReference type="EMBL" id="DQ345357">
    <property type="protein sequence ID" value="ABC70193.1"/>
    <property type="molecule type" value="mRNA"/>
</dbReference>
<dbReference type="SMR" id="Q1A3Q7"/>
<dbReference type="ConoServer" id="1144">
    <property type="toxin name" value="Lt5i precursor"/>
</dbReference>
<dbReference type="GO" id="GO:0005576">
    <property type="term" value="C:extracellular region"/>
    <property type="evidence" value="ECO:0007669"/>
    <property type="project" value="UniProtKB-SubCell"/>
</dbReference>
<dbReference type="GO" id="GO:0090729">
    <property type="term" value="F:toxin activity"/>
    <property type="evidence" value="ECO:0007669"/>
    <property type="project" value="UniProtKB-KW"/>
</dbReference>
<dbReference type="InterPro" id="IPR031565">
    <property type="entry name" value="T-conotoxin"/>
</dbReference>
<dbReference type="Pfam" id="PF16981">
    <property type="entry name" value="Chi-conotoxin"/>
    <property type="match status" value="1"/>
</dbReference>
<sequence>MLCLPVFIILLLLASPAAPKSFETKVQSDLTRTDGNMETEENLGEVRKVYCCLGVRDDWCCAGQIQI</sequence>
<keyword id="KW-0165">Cleavage on pair of basic residues</keyword>
<keyword id="KW-1015">Disulfide bond</keyword>
<keyword id="KW-0964">Secreted</keyword>
<keyword id="KW-0732">Signal</keyword>
<keyword id="KW-0800">Toxin</keyword>
<proteinExistence type="inferred from homology"/>